<gene>
    <name type="primary">traM</name>
</gene>
<organism>
    <name type="scientific">Escherichia coli</name>
    <dbReference type="NCBI Taxonomy" id="562"/>
    <lineage>
        <taxon>Bacteria</taxon>
        <taxon>Pseudomonadati</taxon>
        <taxon>Pseudomonadota</taxon>
        <taxon>Gammaproteobacteria</taxon>
        <taxon>Enterobacterales</taxon>
        <taxon>Enterobacteriaceae</taxon>
        <taxon>Escherichia</taxon>
    </lineage>
</organism>
<proteinExistence type="evidence at protein level"/>
<feature type="chain" id="PRO_0000068472" description="Relaxosome protein TraM">
    <location>
        <begin position="1"/>
        <end position="127"/>
    </location>
</feature>
<feature type="strand" evidence="5">
    <location>
        <begin position="3"/>
        <end position="7"/>
    </location>
</feature>
<feature type="helix" evidence="4">
    <location>
        <begin position="10"/>
        <end position="25"/>
    </location>
</feature>
<feature type="helix" evidence="4">
    <location>
        <begin position="33"/>
        <end position="51"/>
    </location>
</feature>
<feature type="strand" evidence="5">
    <location>
        <begin position="55"/>
        <end position="58"/>
    </location>
</feature>
<feature type="helix" evidence="5">
    <location>
        <begin position="61"/>
        <end position="88"/>
    </location>
</feature>
<feature type="helix" evidence="5">
    <location>
        <begin position="90"/>
        <end position="95"/>
    </location>
</feature>
<feature type="helix" evidence="5">
    <location>
        <begin position="100"/>
        <end position="118"/>
    </location>
</feature>
<feature type="helix" evidence="5">
    <location>
        <begin position="121"/>
        <end position="123"/>
    </location>
</feature>
<name>TRAM8_ECOLX</name>
<accession>P33788</accession>
<comment type="function">
    <text evidence="1">Conjugative DNA transfer (CDT) is the unidirectional transfer of ssDNA plasmid from a donor to a recipient cell. It is the central mechanism by which antibiotic resistance and virulence factors are propagated in bacterial populations. Part of the relaxosome, which facilitates a site- and strand-specific cut in the origin of transfer by TraI, at the nic site (By similarity). TraM binds to three principal regions in the oriT (transfer origin) region; 2 are required for autoregulation while the other is required for plasmid transfer. Plasmid specificity is conferred by the TraD-TraM pair.</text>
</comment>
<comment type="subunit">
    <text evidence="2">Homotetramer. 2 homotetramers cooperatively bind to DNA although they do not contact each other; cooperativity is achieved by DNA kinking and unwinding. Part of the relaxosome, a complex composed of plasmid encoded TraI, TraM, TraY and host-encoded IHF which binds to the F plasmid origin of transfer (oriT) in a site- and sequence-specific manner. Interacts with TraD. Probably also interacts with TraY.</text>
</comment>
<comment type="subcellular location">
    <subcellularLocation>
        <location>Cytoplasm</location>
    </subcellularLocation>
    <text>To a smaller extent in the inner membrane by association with another protein, probably TraD.</text>
</comment>
<comment type="similarity">
    <text evidence="3">Belongs to the relaxosome TraM family.</text>
</comment>
<evidence type="ECO:0000250" key="1"/>
<evidence type="ECO:0000269" key="2">
    <source>
    </source>
</evidence>
<evidence type="ECO:0000305" key="3"/>
<evidence type="ECO:0007829" key="4">
    <source>
        <dbReference type="PDB" id="3OMY"/>
    </source>
</evidence>
<evidence type="ECO:0007829" key="5">
    <source>
        <dbReference type="PDB" id="3ON0"/>
    </source>
</evidence>
<protein>
    <recommendedName>
        <fullName>Relaxosome protein TraM</fullName>
    </recommendedName>
</protein>
<keyword id="KW-0002">3D-structure</keyword>
<keyword id="KW-0184">Conjugation</keyword>
<keyword id="KW-0963">Cytoplasm</keyword>
<keyword id="KW-0903">Direct protein sequencing</keyword>
<keyword id="KW-0238">DNA-binding</keyword>
<keyword id="KW-0614">Plasmid</keyword>
<keyword id="KW-0804">Transcription</keyword>
<keyword id="KW-0805">Transcription regulation</keyword>
<geneLocation type="plasmid">
    <name>IncFV pED208</name>
</geneLocation>
<dbReference type="EMBL" id="X59611">
    <property type="protein sequence ID" value="CAA42174.1"/>
    <property type="molecule type" value="Genomic_DNA"/>
</dbReference>
<dbReference type="PIR" id="S16476">
    <property type="entry name" value="S16476"/>
</dbReference>
<dbReference type="RefSeq" id="WP_015062650.1">
    <property type="nucleotide sequence ID" value="NZ_JAXAEQ010000023.1"/>
</dbReference>
<dbReference type="PDB" id="3OMY">
    <property type="method" value="X-ray"/>
    <property type="resolution" value="1.30 A"/>
    <property type="chains" value="A/B=1-52"/>
</dbReference>
<dbReference type="PDB" id="3ON0">
    <property type="method" value="X-ray"/>
    <property type="resolution" value="2.87 A"/>
    <property type="chains" value="A/B/C/D=1-127"/>
</dbReference>
<dbReference type="PDBsum" id="3OMY"/>
<dbReference type="PDBsum" id="3ON0"/>
<dbReference type="SMR" id="P33788"/>
<dbReference type="EvolutionaryTrace" id="P33788"/>
<dbReference type="GO" id="GO:0005737">
    <property type="term" value="C:cytoplasm"/>
    <property type="evidence" value="ECO:0007669"/>
    <property type="project" value="UniProtKB-SubCell"/>
</dbReference>
<dbReference type="GO" id="GO:0003677">
    <property type="term" value="F:DNA binding"/>
    <property type="evidence" value="ECO:0007669"/>
    <property type="project" value="UniProtKB-KW"/>
</dbReference>
<dbReference type="CDD" id="cd14804">
    <property type="entry name" value="Tra_M"/>
    <property type="match status" value="1"/>
</dbReference>
<dbReference type="Gene3D" id="1.10.287.2320">
    <property type="match status" value="1"/>
</dbReference>
<dbReference type="Gene3D" id="1.10.10.450">
    <property type="entry name" value="TraM protein, DNA-binding"/>
    <property type="match status" value="1"/>
</dbReference>
<dbReference type="InterPro" id="IPR010992">
    <property type="entry name" value="IHF-like_DNA-bd_dom_sf"/>
</dbReference>
<dbReference type="InterPro" id="IPR042073">
    <property type="entry name" value="TraM_DNA-bd"/>
</dbReference>
<dbReference type="InterPro" id="IPR007925">
    <property type="entry name" value="TRelaxosome_TraM"/>
</dbReference>
<dbReference type="NCBIfam" id="NF010267">
    <property type="entry name" value="PRK13713.1"/>
    <property type="match status" value="1"/>
</dbReference>
<dbReference type="Pfam" id="PF05261">
    <property type="entry name" value="Tra_M"/>
    <property type="match status" value="1"/>
</dbReference>
<dbReference type="SUPFAM" id="SSF47729">
    <property type="entry name" value="IHF-like DNA-binding proteins"/>
    <property type="match status" value="1"/>
</dbReference>
<dbReference type="SUPFAM" id="SSF140581">
    <property type="entry name" value="TraM-like"/>
    <property type="match status" value="1"/>
</dbReference>
<sequence length="127" mass="14665">MPKIQTYVNNNVYEQITDLVTIRKQEGIEEASLSNVSSMLLELGLRVYMIQQEKREGGFNQMEYNKLMLENVSRVRAMCTEILKMSVLNQESIASGNFDYAVIKPAIDKFAREQVSIFFPDDEDDQE</sequence>
<reference key="1">
    <citation type="journal article" date="1991" name="Mol. Microbiol.">
        <title>Characterization of the oriT region of the IncFV plasmid pED208.</title>
        <authorList>
            <person name="di Laurenzio L."/>
            <person name="Frost L.S."/>
            <person name="Finlay B.B."/>
            <person name="Paranchych W."/>
        </authorList>
    </citation>
    <scope>NUCLEOTIDE SEQUENCE [GENOMIC DNA]</scope>
    <scope>PROTEIN SEQUENCE OF 1-5</scope>
    <source>
        <plasmid>IncFV pED208</plasmid>
    </source>
</reference>
<reference key="2">
    <citation type="journal article" date="2011" name="Nucleic Acids Res.">
        <title>Structural basis of cooperative DNA recognition by the plasmid conjugation factor, TraM.</title>
        <authorList>
            <person name="Wong J.J."/>
            <person name="Lu J."/>
            <person name="Edwards R.A."/>
            <person name="Frost L.S."/>
            <person name="Glover J.N."/>
        </authorList>
    </citation>
    <scope>X-RAY CRYSTALLOGRAPHY (1.3 ANGSTROMS) OF 1-52</scope>
    <scope>X-RAY CRYSTALLOGRAPHY (2.87 ANGSTROMS) IN COMPLEX WITH DNA</scope>
    <scope>DNA-BINDING</scope>
    <scope>SUBUNIT</scope>
    <source>
        <plasmid>IncFV pED208</plasmid>
    </source>
</reference>